<feature type="chain" id="PRO_0000076957" description="32 kDa beta-galactoside-binding lectin">
    <location>
        <begin position="1"/>
        <end position="279"/>
    </location>
</feature>
<feature type="domain" description="Galectin 1" evidence="2">
    <location>
        <begin position="13"/>
        <end position="144"/>
    </location>
</feature>
<feature type="domain" description="Galectin 2" evidence="2">
    <location>
        <begin position="152"/>
        <end position="279"/>
    </location>
</feature>
<feature type="binding site" evidence="1">
    <location>
        <begin position="213"/>
        <end position="219"/>
    </location>
    <ligand>
        <name>a beta-D-galactoside</name>
        <dbReference type="ChEBI" id="CHEBI:28034"/>
    </ligand>
</feature>
<accession>P36573</accession>
<comment type="function">
    <text>Binds galactose.</text>
</comment>
<comment type="PTM">
    <text>The N-terminus is blocked.</text>
</comment>
<dbReference type="EMBL" id="M94671">
    <property type="protein sequence ID" value="AAB87718.1"/>
    <property type="molecule type" value="mRNA"/>
</dbReference>
<dbReference type="EMBL" id="AB000802">
    <property type="protein sequence ID" value="BAA22942.1"/>
    <property type="molecule type" value="Genomic_DNA"/>
</dbReference>
<dbReference type="EMBL" id="Z82081">
    <property type="protein sequence ID" value="CAB04959.1"/>
    <property type="molecule type" value="Genomic_DNA"/>
</dbReference>
<dbReference type="PIR" id="PX0062">
    <property type="entry name" value="PX0062"/>
</dbReference>
<dbReference type="PIR" id="T37216">
    <property type="entry name" value="T37216"/>
</dbReference>
<dbReference type="RefSeq" id="NP_001379224.1">
    <property type="nucleotide sequence ID" value="NM_001393217.1"/>
</dbReference>
<dbReference type="RefSeq" id="NP_496801.2">
    <property type="nucleotide sequence ID" value="NM_064400.5"/>
</dbReference>
<dbReference type="SMR" id="P36573"/>
<dbReference type="BioGRID" id="40260">
    <property type="interactions" value="91"/>
</dbReference>
<dbReference type="DIP" id="DIP-26872N"/>
<dbReference type="FunCoup" id="P36573">
    <property type="interactions" value="219"/>
</dbReference>
<dbReference type="IntAct" id="P36573">
    <property type="interactions" value="1"/>
</dbReference>
<dbReference type="STRING" id="6239.W09H1.6b.2"/>
<dbReference type="PaxDb" id="6239-W09H1.6b"/>
<dbReference type="PeptideAtlas" id="P36573"/>
<dbReference type="EnsemblMetazoa" id="W09H1.6a.1">
    <property type="protein sequence ID" value="W09H1.6a.1"/>
    <property type="gene ID" value="WBGene00002264"/>
</dbReference>
<dbReference type="GeneID" id="174964"/>
<dbReference type="UCSC" id="W09H1.6a">
    <property type="organism name" value="c. elegans"/>
</dbReference>
<dbReference type="AGR" id="WB:WBGene00002264"/>
<dbReference type="WormBase" id="W09H1.6a">
    <property type="protein sequence ID" value="CE16576"/>
    <property type="gene ID" value="WBGene00002264"/>
    <property type="gene designation" value="lec-1"/>
</dbReference>
<dbReference type="eggNOG" id="KOG3587">
    <property type="taxonomic scope" value="Eukaryota"/>
</dbReference>
<dbReference type="GeneTree" id="ENSGT00940000173978"/>
<dbReference type="HOGENOM" id="CLU_037794_1_1_1"/>
<dbReference type="InParanoid" id="P36573"/>
<dbReference type="Reactome" id="R-CEL-6798695">
    <property type="pathway name" value="Neutrophil degranulation"/>
</dbReference>
<dbReference type="PRO" id="PR:P36573"/>
<dbReference type="Proteomes" id="UP000001940">
    <property type="component" value="Chromosome II"/>
</dbReference>
<dbReference type="Bgee" id="WBGene00002264">
    <property type="expression patterns" value="Expressed in pharyngeal muscle cell (C elegans) and 4 other cell types or tissues"/>
</dbReference>
<dbReference type="ExpressionAtlas" id="P36573">
    <property type="expression patterns" value="baseline and differential"/>
</dbReference>
<dbReference type="GO" id="GO:0060102">
    <property type="term" value="C:cuticular extracellular matrix"/>
    <property type="evidence" value="ECO:0000314"/>
    <property type="project" value="WormBase"/>
</dbReference>
<dbReference type="GO" id="GO:0045121">
    <property type="term" value="C:membrane raft"/>
    <property type="evidence" value="ECO:0007005"/>
    <property type="project" value="WormBase"/>
</dbReference>
<dbReference type="GO" id="GO:0030246">
    <property type="term" value="F:carbohydrate binding"/>
    <property type="evidence" value="ECO:0000318"/>
    <property type="project" value="GO_Central"/>
</dbReference>
<dbReference type="GO" id="GO:0016936">
    <property type="term" value="F:galactoside binding"/>
    <property type="evidence" value="ECO:0000314"/>
    <property type="project" value="WormBase"/>
</dbReference>
<dbReference type="CDD" id="cd00070">
    <property type="entry name" value="GLECT"/>
    <property type="match status" value="2"/>
</dbReference>
<dbReference type="FunFam" id="2.60.120.200:FF:000145">
    <property type="entry name" value="Galectin"/>
    <property type="match status" value="1"/>
</dbReference>
<dbReference type="FunFam" id="2.60.120.200:FF:000155">
    <property type="entry name" value="Galectin"/>
    <property type="match status" value="1"/>
</dbReference>
<dbReference type="Gene3D" id="2.60.120.200">
    <property type="match status" value="2"/>
</dbReference>
<dbReference type="InterPro" id="IPR013320">
    <property type="entry name" value="ConA-like_dom_sf"/>
</dbReference>
<dbReference type="InterPro" id="IPR044156">
    <property type="entry name" value="Galectin-like"/>
</dbReference>
<dbReference type="InterPro" id="IPR001079">
    <property type="entry name" value="Galectin_CRD"/>
</dbReference>
<dbReference type="PANTHER" id="PTHR11346:SF176">
    <property type="entry name" value="32 KDA BETA-GALACTOSIDE-BINDING LECTIN LEC-3"/>
    <property type="match status" value="1"/>
</dbReference>
<dbReference type="PANTHER" id="PTHR11346">
    <property type="entry name" value="GALECTIN"/>
    <property type="match status" value="1"/>
</dbReference>
<dbReference type="Pfam" id="PF00337">
    <property type="entry name" value="Gal-bind_lectin"/>
    <property type="match status" value="2"/>
</dbReference>
<dbReference type="SMART" id="SM00908">
    <property type="entry name" value="Gal-bind_lectin"/>
    <property type="match status" value="2"/>
</dbReference>
<dbReference type="SMART" id="SM00276">
    <property type="entry name" value="GLECT"/>
    <property type="match status" value="2"/>
</dbReference>
<dbReference type="SUPFAM" id="SSF49899">
    <property type="entry name" value="Concanavalin A-like lectins/glucanases"/>
    <property type="match status" value="2"/>
</dbReference>
<dbReference type="PROSITE" id="PS51304">
    <property type="entry name" value="GALECTIN"/>
    <property type="match status" value="2"/>
</dbReference>
<proteinExistence type="evidence at protein level"/>
<name>LEC1_CAEEL</name>
<keyword id="KW-0903">Direct protein sequencing</keyword>
<keyword id="KW-0430">Lectin</keyword>
<keyword id="KW-1185">Reference proteome</keyword>
<keyword id="KW-0677">Repeat</keyword>
<reference key="1">
    <citation type="journal article" date="1992" name="J. Biol. Chem.">
        <title>Evidence that Caenorhabditis elegans 32-kDa beta-galactoside-binding protein is homologous to vertebrate beta-galactoside-binding lectins. cDNA cloning and deduced amino acid sequence.</title>
        <authorList>
            <person name="Hirabayashi J."/>
            <person name="Satoh M."/>
            <person name="Kasai K."/>
        </authorList>
    </citation>
    <scope>NUCLEOTIDE SEQUENCE [MRNA]</scope>
</reference>
<reference key="2">
    <citation type="journal article" date="1997" name="J. Biol. Chem.">
        <title>Structure of the 32-kDa galectin gene of the nematode Caenorhabditis elegans.</title>
        <authorList>
            <person name="Arata Y."/>
            <person name="Hirabayashi J."/>
            <person name="Kasai K."/>
        </authorList>
    </citation>
    <scope>NUCLEOTIDE SEQUENCE [GENOMIC DNA]</scope>
</reference>
<reference key="3">
    <citation type="journal article" date="1998" name="Science">
        <title>Genome sequence of the nematode C. elegans: a platform for investigating biology.</title>
        <authorList>
            <consortium name="The C. elegans sequencing consortium"/>
        </authorList>
    </citation>
    <scope>NUCLEOTIDE SEQUENCE [LARGE SCALE GENOMIC DNA]</scope>
    <source>
        <strain>Bristol N2</strain>
    </source>
</reference>
<reference key="4">
    <citation type="journal article" date="1992" name="J. Biochem.">
        <title>Purification and characterization of beta-galactoside-binding proteins from Caenorhabditis elegans.</title>
        <authorList>
            <person name="Hirabayashi J."/>
            <person name="Satoh M."/>
            <person name="Ohyama Y."/>
            <person name="Kasai K."/>
        </authorList>
    </citation>
    <scope>PROTEIN SEQUENCE OF 202-220</scope>
</reference>
<protein>
    <recommendedName>
        <fullName>32 kDa beta-galactoside-binding lectin</fullName>
    </recommendedName>
    <alternativeName>
        <fullName>32 kDa GBP</fullName>
    </alternativeName>
</protein>
<sequence>MSAEEPKSYPVPYRSVLQEKFEPGQTLIVKGSTIDESQRFTINLHSKTADFSGNDVPLHVSVRFDEGKIVLNSFSNGEWGKEERKSNPIKKGDSFDIRIRAHDDRFQIIVDHKEFKDYEHRLPLSSISHLSIDGDLYLNHVHWGGKYYPVPYESGLANGLPVGKSLLVFGTVEKKAKRFHVNLLRKNGDISFHFNPRFDEKHVIRNSLAANEWGNEEREGKNPFEKGVGFDLVIQNEEYAFQVFVNGERYISFAHRADPHDIAGLQISGDIELSGIQIQ</sequence>
<gene>
    <name type="primary">lec-1</name>
    <name type="ORF">W09H1.6</name>
</gene>
<evidence type="ECO:0000250" key="1"/>
<evidence type="ECO:0000255" key="2">
    <source>
        <dbReference type="PROSITE-ProRule" id="PRU00639"/>
    </source>
</evidence>
<organism>
    <name type="scientific">Caenorhabditis elegans</name>
    <dbReference type="NCBI Taxonomy" id="6239"/>
    <lineage>
        <taxon>Eukaryota</taxon>
        <taxon>Metazoa</taxon>
        <taxon>Ecdysozoa</taxon>
        <taxon>Nematoda</taxon>
        <taxon>Chromadorea</taxon>
        <taxon>Rhabditida</taxon>
        <taxon>Rhabditina</taxon>
        <taxon>Rhabditomorpha</taxon>
        <taxon>Rhabditoidea</taxon>
        <taxon>Rhabditidae</taxon>
        <taxon>Peloderinae</taxon>
        <taxon>Caenorhabditis</taxon>
    </lineage>
</organism>